<comment type="function">
    <text evidence="1">May help in the organization of the PsaE and PsaF subunits.</text>
</comment>
<comment type="subcellular location">
    <subcellularLocation>
        <location evidence="1">Plastid</location>
        <location evidence="1">Chloroplast thylakoid membrane</location>
        <topology evidence="1">Single-pass membrane protein</topology>
    </subcellularLocation>
</comment>
<comment type="similarity">
    <text evidence="1">Belongs to the PsaJ family.</text>
</comment>
<protein>
    <recommendedName>
        <fullName evidence="1">Photosystem I reaction center subunit IX</fullName>
    </recommendedName>
    <alternativeName>
        <fullName evidence="1">PSI-J</fullName>
    </alternativeName>
</protein>
<organism>
    <name type="scientific">Oryza sativa subsp. japonica</name>
    <name type="common">Rice</name>
    <dbReference type="NCBI Taxonomy" id="39947"/>
    <lineage>
        <taxon>Eukaryota</taxon>
        <taxon>Viridiplantae</taxon>
        <taxon>Streptophyta</taxon>
        <taxon>Embryophyta</taxon>
        <taxon>Tracheophyta</taxon>
        <taxon>Spermatophyta</taxon>
        <taxon>Magnoliopsida</taxon>
        <taxon>Liliopsida</taxon>
        <taxon>Poales</taxon>
        <taxon>Poaceae</taxon>
        <taxon>BOP clade</taxon>
        <taxon>Oryzoideae</taxon>
        <taxon>Oryzeae</taxon>
        <taxon>Oryzinae</taxon>
        <taxon>Oryza</taxon>
        <taxon>Oryza sativa</taxon>
    </lineage>
</organism>
<gene>
    <name evidence="1" type="primary">psaJ</name>
    <name type="ordered locus">LOC_Osp1g00550</name>
</gene>
<proteinExistence type="inferred from homology"/>
<accession>P12192</accession>
<dbReference type="EMBL" id="X15901">
    <property type="protein sequence ID" value="CAA33968.1"/>
    <property type="molecule type" value="Genomic_DNA"/>
</dbReference>
<dbReference type="EMBL" id="AY522330">
    <property type="status" value="NOT_ANNOTATED_CDS"/>
    <property type="molecule type" value="Genomic_DNA"/>
</dbReference>
<dbReference type="PIR" id="JQ0246">
    <property type="entry name" value="A1RZJ"/>
</dbReference>
<dbReference type="RefSeq" id="NP_039406.1">
    <property type="nucleotide sequence ID" value="NC_001320.1"/>
</dbReference>
<dbReference type="SMR" id="P12192"/>
<dbReference type="FunCoup" id="P12192">
    <property type="interactions" value="51"/>
</dbReference>
<dbReference type="STRING" id="39947.P12192"/>
<dbReference type="PaxDb" id="39947-P12192"/>
<dbReference type="KEGG" id="dosa:CAA33968.1"/>
<dbReference type="KEGG" id="osa:3131473"/>
<dbReference type="InParanoid" id="P12192"/>
<dbReference type="OrthoDB" id="724296at2759"/>
<dbReference type="Proteomes" id="UP000059680">
    <property type="component" value="Chloroplast"/>
</dbReference>
<dbReference type="GO" id="GO:0009535">
    <property type="term" value="C:chloroplast thylakoid membrane"/>
    <property type="evidence" value="ECO:0007669"/>
    <property type="project" value="UniProtKB-SubCell"/>
</dbReference>
<dbReference type="GO" id="GO:0009522">
    <property type="term" value="C:photosystem I"/>
    <property type="evidence" value="ECO:0007669"/>
    <property type="project" value="UniProtKB-KW"/>
</dbReference>
<dbReference type="GO" id="GO:0009536">
    <property type="term" value="C:plastid"/>
    <property type="evidence" value="ECO:0000250"/>
    <property type="project" value="Gramene"/>
</dbReference>
<dbReference type="GO" id="GO:0015979">
    <property type="term" value="P:photosynthesis"/>
    <property type="evidence" value="ECO:0007669"/>
    <property type="project" value="UniProtKB-UniRule"/>
</dbReference>
<dbReference type="FunFam" id="1.20.5.510:FF:000001">
    <property type="entry name" value="Photosystem I reaction center subunit IX"/>
    <property type="match status" value="1"/>
</dbReference>
<dbReference type="Gene3D" id="1.20.5.510">
    <property type="entry name" value="Single helix bin"/>
    <property type="match status" value="1"/>
</dbReference>
<dbReference type="HAMAP" id="MF_00522">
    <property type="entry name" value="PSI_PsaJ"/>
    <property type="match status" value="1"/>
</dbReference>
<dbReference type="InterPro" id="IPR002615">
    <property type="entry name" value="PSI_PsaJ"/>
</dbReference>
<dbReference type="InterPro" id="IPR036062">
    <property type="entry name" value="PSI_PsaJ_sf"/>
</dbReference>
<dbReference type="PANTHER" id="PTHR36082">
    <property type="match status" value="1"/>
</dbReference>
<dbReference type="PANTHER" id="PTHR36082:SF2">
    <property type="entry name" value="PHOTOSYSTEM I REACTION CENTER SUBUNIT IX"/>
    <property type="match status" value="1"/>
</dbReference>
<dbReference type="Pfam" id="PF01701">
    <property type="entry name" value="PSI_PsaJ"/>
    <property type="match status" value="1"/>
</dbReference>
<dbReference type="SUPFAM" id="SSF81544">
    <property type="entry name" value="Subunit IX of photosystem I reaction centre, PsaJ"/>
    <property type="match status" value="1"/>
</dbReference>
<keyword id="KW-0150">Chloroplast</keyword>
<keyword id="KW-0472">Membrane</keyword>
<keyword id="KW-0602">Photosynthesis</keyword>
<keyword id="KW-0603">Photosystem I</keyword>
<keyword id="KW-0934">Plastid</keyword>
<keyword id="KW-1185">Reference proteome</keyword>
<keyword id="KW-0793">Thylakoid</keyword>
<keyword id="KW-0812">Transmembrane</keyword>
<keyword id="KW-1133">Transmembrane helix</keyword>
<reference key="1">
    <citation type="journal article" date="1989" name="Mol. Gen. Genet.">
        <title>The complete sequence of the rice (Oryza sativa) chloroplast genome: intermolecular recombination between distinct tRNA genes accounts for a major plastid DNA inversion during the evolution of the cereals.</title>
        <authorList>
            <person name="Hiratsuka J."/>
            <person name="Shimada H."/>
            <person name="Whittier R."/>
            <person name="Ishibashi T."/>
            <person name="Sakamoto M."/>
            <person name="Mori M."/>
            <person name="Kondo C."/>
            <person name="Honji Y."/>
            <person name="Sun C.-R."/>
            <person name="Meng B.-Y."/>
            <person name="Li Y.-Q."/>
            <person name="Kanno A."/>
            <person name="Nishizawa Y."/>
            <person name="Hirai A."/>
            <person name="Shinozaki K."/>
            <person name="Sugiura M."/>
        </authorList>
    </citation>
    <scope>NUCLEOTIDE SEQUENCE [LARGE SCALE GENOMIC DNA]</scope>
    <source>
        <strain>cv. Nipponbare</strain>
    </source>
</reference>
<reference key="2">
    <citation type="journal article" date="2004" name="Plant Physiol.">
        <title>A comparison of rice chloroplast genomes.</title>
        <authorList>
            <person name="Tang J."/>
            <person name="Xia H."/>
            <person name="Cao M."/>
            <person name="Zhang X."/>
            <person name="Zeng W."/>
            <person name="Hu S."/>
            <person name="Tong W."/>
            <person name="Wang J."/>
            <person name="Wang J."/>
            <person name="Yu J."/>
            <person name="Yang H."/>
            <person name="Zhu L."/>
        </authorList>
    </citation>
    <scope>NUCLEOTIDE SEQUENCE [LARGE SCALE GENOMIC DNA]</scope>
    <source>
        <strain>cv. Nipponbare</strain>
    </source>
</reference>
<feature type="chain" id="PRO_0000207803" description="Photosystem I reaction center subunit IX">
    <location>
        <begin position="1"/>
        <end position="44"/>
    </location>
</feature>
<feature type="transmembrane region" description="Helical" evidence="1">
    <location>
        <begin position="7"/>
        <end position="27"/>
    </location>
</feature>
<feature type="sequence conflict" description="In Ref. 1; CAA33968." evidence="2" ref="1">
    <original>L</original>
    <variation>V</variation>
    <location>
        <position position="14"/>
    </location>
</feature>
<feature type="sequence conflict" description="In Ref. 1; CAA33968." evidence="2" ref="1">
    <original>A</original>
    <variation>R</variation>
    <location>
        <position position="23"/>
    </location>
</feature>
<evidence type="ECO:0000255" key="1">
    <source>
        <dbReference type="HAMAP-Rule" id="MF_00522"/>
    </source>
</evidence>
<evidence type="ECO:0000305" key="2"/>
<sequence>MRDIKTYLSVAPVLSTLWFGALAGLLIEINRLFPDALSFPFFSF</sequence>
<name>PSAJ_ORYSJ</name>
<geneLocation type="chloroplast"/>